<reference key="1">
    <citation type="journal article" date="1998" name="J. Biol. Chem.">
        <title>Purification, cloning, and preliminary characterization of a Spiroplasma citri ribosomal protein with DNA binding capacity.</title>
        <authorList>
            <person name="Le Dantec L."/>
            <person name="Castroviejo M."/>
            <person name="Bove J.M."/>
            <person name="Saillard C."/>
        </authorList>
    </citation>
    <scope>NUCLEOTIDE SEQUENCE [GENOMIC DNA]</scope>
    <source>
        <strain>ATCC 27556 / NCPPB 2647 / R8A2</strain>
    </source>
</reference>
<protein>
    <recommendedName>
        <fullName evidence="2">Small ribosomal subunit protein uS3</fullName>
    </recommendedName>
    <alternativeName>
        <fullName evidence="4">30S ribosomal protein S3</fullName>
    </alternativeName>
</protein>
<proteinExistence type="inferred from homology"/>
<organism>
    <name type="scientific">Spiroplasma citri</name>
    <dbReference type="NCBI Taxonomy" id="2133"/>
    <lineage>
        <taxon>Bacteria</taxon>
        <taxon>Bacillati</taxon>
        <taxon>Mycoplasmatota</taxon>
        <taxon>Mollicutes</taxon>
        <taxon>Entomoplasmatales</taxon>
        <taxon>Spiroplasmataceae</taxon>
        <taxon>Spiroplasma</taxon>
    </lineage>
</organism>
<evidence type="ECO:0000250" key="1"/>
<evidence type="ECO:0000255" key="2">
    <source>
        <dbReference type="HAMAP-Rule" id="MF_01309"/>
    </source>
</evidence>
<evidence type="ECO:0000256" key="3">
    <source>
        <dbReference type="SAM" id="MobiDB-lite"/>
    </source>
</evidence>
<evidence type="ECO:0000305" key="4"/>
<feature type="initiator methionine" description="Removed" evidence="1">
    <location>
        <position position="1"/>
    </location>
</feature>
<feature type="chain" id="PRO_0000130196" description="Small ribosomal subunit protein uS3">
    <location>
        <begin position="2"/>
        <end position="252"/>
    </location>
</feature>
<feature type="domain" description="KH type-2" evidence="2">
    <location>
        <begin position="39"/>
        <end position="110"/>
    </location>
</feature>
<feature type="region of interest" description="Disordered" evidence="3">
    <location>
        <begin position="218"/>
        <end position="252"/>
    </location>
</feature>
<feature type="compositionally biased region" description="Basic and acidic residues" evidence="3">
    <location>
        <begin position="219"/>
        <end position="252"/>
    </location>
</feature>
<keyword id="KW-0687">Ribonucleoprotein</keyword>
<keyword id="KW-0689">Ribosomal protein</keyword>
<keyword id="KW-0694">RNA-binding</keyword>
<keyword id="KW-0699">rRNA-binding</keyword>
<accession>O31161</accession>
<sequence length="252" mass="28096">MGQKVSPTGLRVGVIKTWDSRWYAEKQEYVKWLHQDIKIRKALMKELKGASVSKIEIERTKKEIVIFIRTARVGVVLGQEGKNIAKLVKLVHITIGDRKMEVKINVVEIKNPDTDAQLVANTIAEQIVNRASFRSVQKLAIKKAMKAGAQGIKTSVSGRLGGVDMARTEGYTKGTVPLATLRSDIDFALAEALTTYGQIGVKVWICKGEILSKELVSTSDEKPKFEKRDFNRSNNNRRDQAPKSHPVAKEAK</sequence>
<gene>
    <name evidence="2" type="primary">rpsC</name>
</gene>
<name>RS3_SPICI</name>
<dbReference type="EMBL" id="AF031160">
    <property type="protein sequence ID" value="AAC35870.1"/>
    <property type="molecule type" value="Genomic_DNA"/>
</dbReference>
<dbReference type="SMR" id="O31161"/>
<dbReference type="STRING" id="2133.SCITRI_00337"/>
<dbReference type="GO" id="GO:0022627">
    <property type="term" value="C:cytosolic small ribosomal subunit"/>
    <property type="evidence" value="ECO:0007669"/>
    <property type="project" value="TreeGrafter"/>
</dbReference>
<dbReference type="GO" id="GO:0003729">
    <property type="term" value="F:mRNA binding"/>
    <property type="evidence" value="ECO:0007669"/>
    <property type="project" value="UniProtKB-UniRule"/>
</dbReference>
<dbReference type="GO" id="GO:0019843">
    <property type="term" value="F:rRNA binding"/>
    <property type="evidence" value="ECO:0007669"/>
    <property type="project" value="UniProtKB-UniRule"/>
</dbReference>
<dbReference type="GO" id="GO:0003735">
    <property type="term" value="F:structural constituent of ribosome"/>
    <property type="evidence" value="ECO:0007669"/>
    <property type="project" value="InterPro"/>
</dbReference>
<dbReference type="GO" id="GO:0006412">
    <property type="term" value="P:translation"/>
    <property type="evidence" value="ECO:0007669"/>
    <property type="project" value="UniProtKB-UniRule"/>
</dbReference>
<dbReference type="CDD" id="cd02412">
    <property type="entry name" value="KH-II_30S_S3"/>
    <property type="match status" value="1"/>
</dbReference>
<dbReference type="FunFam" id="3.30.300.20:FF:000001">
    <property type="entry name" value="30S ribosomal protein S3"/>
    <property type="match status" value="1"/>
</dbReference>
<dbReference type="Gene3D" id="3.30.300.20">
    <property type="match status" value="1"/>
</dbReference>
<dbReference type="Gene3D" id="3.30.1140.32">
    <property type="entry name" value="Ribosomal protein S3, C-terminal domain"/>
    <property type="match status" value="1"/>
</dbReference>
<dbReference type="HAMAP" id="MF_01309_B">
    <property type="entry name" value="Ribosomal_uS3_B"/>
    <property type="match status" value="1"/>
</dbReference>
<dbReference type="InterPro" id="IPR004087">
    <property type="entry name" value="KH_dom"/>
</dbReference>
<dbReference type="InterPro" id="IPR015946">
    <property type="entry name" value="KH_dom-like_a/b"/>
</dbReference>
<dbReference type="InterPro" id="IPR004044">
    <property type="entry name" value="KH_dom_type_2"/>
</dbReference>
<dbReference type="InterPro" id="IPR009019">
    <property type="entry name" value="KH_sf_prok-type"/>
</dbReference>
<dbReference type="InterPro" id="IPR036419">
    <property type="entry name" value="Ribosomal_S3_C_sf"/>
</dbReference>
<dbReference type="InterPro" id="IPR005704">
    <property type="entry name" value="Ribosomal_uS3_bac-typ"/>
</dbReference>
<dbReference type="InterPro" id="IPR001351">
    <property type="entry name" value="Ribosomal_uS3_C"/>
</dbReference>
<dbReference type="NCBIfam" id="TIGR01009">
    <property type="entry name" value="rpsC_bact"/>
    <property type="match status" value="1"/>
</dbReference>
<dbReference type="PANTHER" id="PTHR11760">
    <property type="entry name" value="30S/40S RIBOSOMAL PROTEIN S3"/>
    <property type="match status" value="1"/>
</dbReference>
<dbReference type="PANTHER" id="PTHR11760:SF19">
    <property type="entry name" value="SMALL RIBOSOMAL SUBUNIT PROTEIN US3C"/>
    <property type="match status" value="1"/>
</dbReference>
<dbReference type="Pfam" id="PF07650">
    <property type="entry name" value="KH_2"/>
    <property type="match status" value="1"/>
</dbReference>
<dbReference type="Pfam" id="PF00189">
    <property type="entry name" value="Ribosomal_S3_C"/>
    <property type="match status" value="1"/>
</dbReference>
<dbReference type="SMART" id="SM00322">
    <property type="entry name" value="KH"/>
    <property type="match status" value="1"/>
</dbReference>
<dbReference type="SUPFAM" id="SSF54814">
    <property type="entry name" value="Prokaryotic type KH domain (KH-domain type II)"/>
    <property type="match status" value="1"/>
</dbReference>
<dbReference type="SUPFAM" id="SSF54821">
    <property type="entry name" value="Ribosomal protein S3 C-terminal domain"/>
    <property type="match status" value="1"/>
</dbReference>
<dbReference type="PROSITE" id="PS50823">
    <property type="entry name" value="KH_TYPE_2"/>
    <property type="match status" value="1"/>
</dbReference>
<comment type="function">
    <text evidence="2">Binds the lower part of the 30S subunit head. Binds mRNA in the 70S ribosome, positioning it for translation.</text>
</comment>
<comment type="subunit">
    <text evidence="2">Part of the 30S ribosomal subunit. Forms a tight complex with proteins S10 and S14.</text>
</comment>
<comment type="similarity">
    <text evidence="2">Belongs to the universal ribosomal protein uS3 family.</text>
</comment>